<organism>
    <name type="scientific">Haemophilus influenzae (strain PittEE)</name>
    <dbReference type="NCBI Taxonomy" id="374930"/>
    <lineage>
        <taxon>Bacteria</taxon>
        <taxon>Pseudomonadati</taxon>
        <taxon>Pseudomonadota</taxon>
        <taxon>Gammaproteobacteria</taxon>
        <taxon>Pasteurellales</taxon>
        <taxon>Pasteurellaceae</taxon>
        <taxon>Haemophilus</taxon>
    </lineage>
</organism>
<keyword id="KW-0143">Chaperone</keyword>
<keyword id="KW-0963">Cytoplasm</keyword>
<keyword id="KW-0690">Ribosome biogenesis</keyword>
<keyword id="KW-0698">rRNA processing</keyword>
<reference key="1">
    <citation type="journal article" date="2007" name="Genome Biol.">
        <title>Characterization and modeling of the Haemophilus influenzae core and supragenomes based on the complete genomic sequences of Rd and 12 clinical nontypeable strains.</title>
        <authorList>
            <person name="Hogg J.S."/>
            <person name="Hu F.Z."/>
            <person name="Janto B."/>
            <person name="Boissy R."/>
            <person name="Hayes J."/>
            <person name="Keefe R."/>
            <person name="Post J.C."/>
            <person name="Ehrlich G.D."/>
        </authorList>
    </citation>
    <scope>NUCLEOTIDE SEQUENCE [LARGE SCALE GENOMIC DNA]</scope>
    <source>
        <strain>PittEE</strain>
    </source>
</reference>
<feature type="chain" id="PRO_1000001178" description="Ribosome maturation factor RimM">
    <location>
        <begin position="1"/>
        <end position="175"/>
    </location>
</feature>
<feature type="domain" description="PRC barrel" evidence="1">
    <location>
        <begin position="96"/>
        <end position="175"/>
    </location>
</feature>
<comment type="function">
    <text evidence="1">An accessory protein needed during the final step in the assembly of 30S ribosomal subunit, possibly for assembly of the head region. Essential for efficient processing of 16S rRNA. May be needed both before and after RbfA during the maturation of 16S rRNA. It has affinity for free ribosomal 30S subunits but not for 70S ribosomes.</text>
</comment>
<comment type="subunit">
    <text evidence="1">Binds ribosomal protein uS19.</text>
</comment>
<comment type="subcellular location">
    <subcellularLocation>
        <location evidence="1">Cytoplasm</location>
    </subcellularLocation>
</comment>
<comment type="domain">
    <text evidence="1">The PRC barrel domain binds ribosomal protein uS19.</text>
</comment>
<comment type="similarity">
    <text evidence="1">Belongs to the RimM family.</text>
</comment>
<evidence type="ECO:0000255" key="1">
    <source>
        <dbReference type="HAMAP-Rule" id="MF_00014"/>
    </source>
</evidence>
<dbReference type="EMBL" id="CP000671">
    <property type="protein sequence ID" value="ABQ97903.1"/>
    <property type="molecule type" value="Genomic_DNA"/>
</dbReference>
<dbReference type="SMR" id="A5UAV2"/>
<dbReference type="KEGG" id="hip:CGSHiEE_02230"/>
<dbReference type="HOGENOM" id="CLU_077636_1_0_6"/>
<dbReference type="GO" id="GO:0005737">
    <property type="term" value="C:cytoplasm"/>
    <property type="evidence" value="ECO:0007669"/>
    <property type="project" value="UniProtKB-SubCell"/>
</dbReference>
<dbReference type="GO" id="GO:0005840">
    <property type="term" value="C:ribosome"/>
    <property type="evidence" value="ECO:0007669"/>
    <property type="project" value="InterPro"/>
</dbReference>
<dbReference type="GO" id="GO:0043022">
    <property type="term" value="F:ribosome binding"/>
    <property type="evidence" value="ECO:0007669"/>
    <property type="project" value="InterPro"/>
</dbReference>
<dbReference type="GO" id="GO:0042274">
    <property type="term" value="P:ribosomal small subunit biogenesis"/>
    <property type="evidence" value="ECO:0007669"/>
    <property type="project" value="UniProtKB-UniRule"/>
</dbReference>
<dbReference type="GO" id="GO:0006364">
    <property type="term" value="P:rRNA processing"/>
    <property type="evidence" value="ECO:0007669"/>
    <property type="project" value="UniProtKB-UniRule"/>
</dbReference>
<dbReference type="Gene3D" id="2.30.30.240">
    <property type="entry name" value="PRC-barrel domain"/>
    <property type="match status" value="1"/>
</dbReference>
<dbReference type="Gene3D" id="2.40.30.60">
    <property type="entry name" value="RimM"/>
    <property type="match status" value="1"/>
</dbReference>
<dbReference type="HAMAP" id="MF_00014">
    <property type="entry name" value="Ribosome_mat_RimM"/>
    <property type="match status" value="1"/>
</dbReference>
<dbReference type="InterPro" id="IPR011033">
    <property type="entry name" value="PRC_barrel-like_sf"/>
</dbReference>
<dbReference type="InterPro" id="IPR056792">
    <property type="entry name" value="PRC_RimM"/>
</dbReference>
<dbReference type="InterPro" id="IPR011961">
    <property type="entry name" value="RimM"/>
</dbReference>
<dbReference type="InterPro" id="IPR002676">
    <property type="entry name" value="RimM_N"/>
</dbReference>
<dbReference type="InterPro" id="IPR036976">
    <property type="entry name" value="RimM_N_sf"/>
</dbReference>
<dbReference type="InterPro" id="IPR009000">
    <property type="entry name" value="Transl_B-barrel_sf"/>
</dbReference>
<dbReference type="NCBIfam" id="TIGR02273">
    <property type="entry name" value="16S_RimM"/>
    <property type="match status" value="1"/>
</dbReference>
<dbReference type="PANTHER" id="PTHR33692">
    <property type="entry name" value="RIBOSOME MATURATION FACTOR RIMM"/>
    <property type="match status" value="1"/>
</dbReference>
<dbReference type="PANTHER" id="PTHR33692:SF1">
    <property type="entry name" value="RIBOSOME MATURATION FACTOR RIMM"/>
    <property type="match status" value="1"/>
</dbReference>
<dbReference type="Pfam" id="PF24986">
    <property type="entry name" value="PRC_RimM"/>
    <property type="match status" value="1"/>
</dbReference>
<dbReference type="Pfam" id="PF01782">
    <property type="entry name" value="RimM"/>
    <property type="match status" value="1"/>
</dbReference>
<dbReference type="SUPFAM" id="SSF50346">
    <property type="entry name" value="PRC-barrel domain"/>
    <property type="match status" value="1"/>
</dbReference>
<dbReference type="SUPFAM" id="SSF50447">
    <property type="entry name" value="Translation proteins"/>
    <property type="match status" value="1"/>
</dbReference>
<accession>A5UAV2</accession>
<gene>
    <name evidence="1" type="primary">rimM</name>
    <name type="ordered locus">CGSHiEE_02230</name>
</gene>
<protein>
    <recommendedName>
        <fullName evidence="1">Ribosome maturation factor RimM</fullName>
    </recommendedName>
</protein>
<proteinExistence type="inferred from homology"/>
<sequence length="175" mass="20198">MEQQHIEVVGKLGSTYGIRGWLRIYSSTEQAESIFDYQPWFLKIKGEWQSIELENWRYHNHEIIVKLKGVDDREAAQILANVEIGVDLSVFPELEEGDYYWHDLIGCTVVNLEGYTMGTVTEMMETGSNDVLVVKANTKDAFGKQERLIPFLYEQVVKRVDLTTKTIEVDWDAGF</sequence>
<name>RIMM_HAEIE</name>